<sequence length="623" mass="69149">MPHSDELDAGNVLAVENLNIAFMQDQQKIAAVRNLSFSLQRGETLAIVGESGSGKSVTALALMRLLEQAGGLVQCDKMLLRRRSRDVIELSEQSATQMRHVRGADMAMIFQEPMTSLNPVFTVGEQIAESIRLHQNASREEAMVEAKRMLDQVRIPEAQTILSRYPHQLSGGMRQRVMIAMALSCRPAVLIADEPTTALDVTIQAQILQLIKVLQKEMSMGVIFITHDMGVVAEIADRVLVMYQGEAVETGTVEQIFHAPQHPYTRALLAAVPQLGAMKGLDYPRRFPLISLEHPAKQAPPIEQKTVVDGEPVLRVRNLVTRFSLRSGLLNRVTREVHAVEKVSFDLWPGETLSLVGESGSGKSTTGRALLRLVESQGGEIIFNGQRIDTLSPGKLQALRRDIQFIFQDPYASLDPRQTIGDSIIEPLRVHGLLPGKDAVARVAWLLERVGLLPEHAWRYPHEFSGGQRQRICIARALALNPKVIIADEAVSALDVSIRGQIINLLLDLQRDFGIAYLFISHDMAVVERISHRVAVMYLGQIVEIGPRRAVFENPQHPYTRKLLAAVPVAEPSRQRPQRVLLSDDLPSNIHLRGEEVAAVSLQCVGPGHYVAQPQSEYAFMRR</sequence>
<organism>
    <name type="scientific">Shigella dysenteriae serotype 1 (strain Sd197)</name>
    <dbReference type="NCBI Taxonomy" id="300267"/>
    <lineage>
        <taxon>Bacteria</taxon>
        <taxon>Pseudomonadati</taxon>
        <taxon>Pseudomonadota</taxon>
        <taxon>Gammaproteobacteria</taxon>
        <taxon>Enterobacterales</taxon>
        <taxon>Enterobacteriaceae</taxon>
        <taxon>Shigella</taxon>
    </lineage>
</organism>
<dbReference type="EC" id="7.4.2.10" evidence="1"/>
<dbReference type="EMBL" id="CP000034">
    <property type="protein sequence ID" value="ABB60942.1"/>
    <property type="status" value="ALT_INIT"/>
    <property type="molecule type" value="Genomic_DNA"/>
</dbReference>
<dbReference type="RefSeq" id="WP_024259449.1">
    <property type="nucleotide sequence ID" value="NC_007606.1"/>
</dbReference>
<dbReference type="RefSeq" id="YP_402431.1">
    <property type="nucleotide sequence ID" value="NC_007606.1"/>
</dbReference>
<dbReference type="SMR" id="Q32IB5"/>
<dbReference type="STRING" id="300267.SDY_0758"/>
<dbReference type="EnsemblBacteria" id="ABB60942">
    <property type="protein sequence ID" value="ABB60942"/>
    <property type="gene ID" value="SDY_0758"/>
</dbReference>
<dbReference type="KEGG" id="sdy:SDY_0758"/>
<dbReference type="PATRIC" id="fig|300267.13.peg.872"/>
<dbReference type="HOGENOM" id="CLU_000604_86_2_6"/>
<dbReference type="Proteomes" id="UP000002716">
    <property type="component" value="Chromosome"/>
</dbReference>
<dbReference type="GO" id="GO:0005886">
    <property type="term" value="C:plasma membrane"/>
    <property type="evidence" value="ECO:0007669"/>
    <property type="project" value="UniProtKB-SubCell"/>
</dbReference>
<dbReference type="GO" id="GO:0005524">
    <property type="term" value="F:ATP binding"/>
    <property type="evidence" value="ECO:0007669"/>
    <property type="project" value="UniProtKB-KW"/>
</dbReference>
<dbReference type="GO" id="GO:0016887">
    <property type="term" value="F:ATP hydrolysis activity"/>
    <property type="evidence" value="ECO:0007669"/>
    <property type="project" value="InterPro"/>
</dbReference>
<dbReference type="GO" id="GO:0015833">
    <property type="term" value="P:peptide transport"/>
    <property type="evidence" value="ECO:0007669"/>
    <property type="project" value="InterPro"/>
</dbReference>
<dbReference type="GO" id="GO:0055085">
    <property type="term" value="P:transmembrane transport"/>
    <property type="evidence" value="ECO:0007669"/>
    <property type="project" value="UniProtKB-ARBA"/>
</dbReference>
<dbReference type="CDD" id="cd03257">
    <property type="entry name" value="ABC_NikE_OppD_transporters"/>
    <property type="match status" value="2"/>
</dbReference>
<dbReference type="FunFam" id="3.40.50.300:FF:001061">
    <property type="entry name" value="Glutathione import ATP-binding protein GsiA"/>
    <property type="match status" value="1"/>
</dbReference>
<dbReference type="FunFam" id="3.40.50.300:FF:000016">
    <property type="entry name" value="Oligopeptide ABC transporter ATP-binding component"/>
    <property type="match status" value="1"/>
</dbReference>
<dbReference type="Gene3D" id="3.40.50.300">
    <property type="entry name" value="P-loop containing nucleotide triphosphate hydrolases"/>
    <property type="match status" value="2"/>
</dbReference>
<dbReference type="InterPro" id="IPR003593">
    <property type="entry name" value="AAA+_ATPase"/>
</dbReference>
<dbReference type="InterPro" id="IPR050319">
    <property type="entry name" value="ABC_transp_ATP-bind"/>
</dbReference>
<dbReference type="InterPro" id="IPR003439">
    <property type="entry name" value="ABC_transporter-like_ATP-bd"/>
</dbReference>
<dbReference type="InterPro" id="IPR017871">
    <property type="entry name" value="ABC_transporter-like_CS"/>
</dbReference>
<dbReference type="InterPro" id="IPR013563">
    <property type="entry name" value="Oligopep_ABC_C"/>
</dbReference>
<dbReference type="InterPro" id="IPR027417">
    <property type="entry name" value="P-loop_NTPase"/>
</dbReference>
<dbReference type="NCBIfam" id="NF007613">
    <property type="entry name" value="PRK10261.1"/>
    <property type="match status" value="1"/>
</dbReference>
<dbReference type="NCBIfam" id="NF007739">
    <property type="entry name" value="PRK10419.1"/>
    <property type="match status" value="2"/>
</dbReference>
<dbReference type="NCBIfam" id="NF008453">
    <property type="entry name" value="PRK11308.1"/>
    <property type="match status" value="2"/>
</dbReference>
<dbReference type="PANTHER" id="PTHR43776:SF15">
    <property type="entry name" value="GLUTATHIONE IMPORT ATP-BINDING PROTEIN GSIA"/>
    <property type="match status" value="1"/>
</dbReference>
<dbReference type="PANTHER" id="PTHR43776">
    <property type="entry name" value="TRANSPORT ATP-BINDING PROTEIN"/>
    <property type="match status" value="1"/>
</dbReference>
<dbReference type="Pfam" id="PF00005">
    <property type="entry name" value="ABC_tran"/>
    <property type="match status" value="2"/>
</dbReference>
<dbReference type="Pfam" id="PF08352">
    <property type="entry name" value="oligo_HPY"/>
    <property type="match status" value="2"/>
</dbReference>
<dbReference type="SMART" id="SM00382">
    <property type="entry name" value="AAA"/>
    <property type="match status" value="2"/>
</dbReference>
<dbReference type="SUPFAM" id="SSF52540">
    <property type="entry name" value="P-loop containing nucleoside triphosphate hydrolases"/>
    <property type="match status" value="2"/>
</dbReference>
<dbReference type="PROSITE" id="PS00211">
    <property type="entry name" value="ABC_TRANSPORTER_1"/>
    <property type="match status" value="2"/>
</dbReference>
<dbReference type="PROSITE" id="PS50893">
    <property type="entry name" value="ABC_TRANSPORTER_2"/>
    <property type="match status" value="2"/>
</dbReference>
<comment type="function">
    <text evidence="1">Part of the ABC transporter complex GsiABCD involved in glutathione import. Responsible for energy coupling to the transport system.</text>
</comment>
<comment type="catalytic activity">
    <reaction evidence="1">
        <text>glutathione(out) + ATP + H2O = glutathione(in) + ADP + phosphate + H(+)</text>
        <dbReference type="Rhea" id="RHEA:29791"/>
        <dbReference type="ChEBI" id="CHEBI:15377"/>
        <dbReference type="ChEBI" id="CHEBI:15378"/>
        <dbReference type="ChEBI" id="CHEBI:30616"/>
        <dbReference type="ChEBI" id="CHEBI:43474"/>
        <dbReference type="ChEBI" id="CHEBI:57925"/>
        <dbReference type="ChEBI" id="CHEBI:456216"/>
        <dbReference type="EC" id="7.4.2.10"/>
    </reaction>
</comment>
<comment type="subunit">
    <text evidence="1">The complex is composed of two ATP-binding proteins (GsiA), two transmembrane proteins (GsiC and GsiD) and a solute-binding protein (GsiB).</text>
</comment>
<comment type="subcellular location">
    <subcellularLocation>
        <location evidence="1">Cell inner membrane</location>
        <topology evidence="1">Peripheral membrane protein</topology>
    </subcellularLocation>
</comment>
<comment type="similarity">
    <text evidence="3">Belongs to the ABC transporter superfamily. Glutathione importer (TC 3.A.1.5.11) family.</text>
</comment>
<comment type="sequence caution" evidence="3">
    <conflict type="erroneous initiation">
        <sequence resource="EMBL-CDS" id="ABB60942"/>
    </conflict>
</comment>
<evidence type="ECO:0000250" key="1">
    <source>
        <dbReference type="UniProtKB" id="P75796"/>
    </source>
</evidence>
<evidence type="ECO:0000255" key="2">
    <source>
        <dbReference type="PROSITE-ProRule" id="PRU00434"/>
    </source>
</evidence>
<evidence type="ECO:0000305" key="3"/>
<proteinExistence type="inferred from homology"/>
<gene>
    <name evidence="1" type="primary">gsiA</name>
    <name type="ordered locus">SDY_0758</name>
</gene>
<protein>
    <recommendedName>
        <fullName evidence="1">Glutathione import ATP-binding protein GsiA</fullName>
        <ecNumber evidence="1">7.4.2.10</ecNumber>
    </recommendedName>
</protein>
<accession>Q32IB5</accession>
<name>GSIA_SHIDS</name>
<reference key="1">
    <citation type="journal article" date="2005" name="Nucleic Acids Res.">
        <title>Genome dynamics and diversity of Shigella species, the etiologic agents of bacillary dysentery.</title>
        <authorList>
            <person name="Yang F."/>
            <person name="Yang J."/>
            <person name="Zhang X."/>
            <person name="Chen L."/>
            <person name="Jiang Y."/>
            <person name="Yan Y."/>
            <person name="Tang X."/>
            <person name="Wang J."/>
            <person name="Xiong Z."/>
            <person name="Dong J."/>
            <person name="Xue Y."/>
            <person name="Zhu Y."/>
            <person name="Xu X."/>
            <person name="Sun L."/>
            <person name="Chen S."/>
            <person name="Nie H."/>
            <person name="Peng J."/>
            <person name="Xu J."/>
            <person name="Wang Y."/>
            <person name="Yuan Z."/>
            <person name="Wen Y."/>
            <person name="Yao Z."/>
            <person name="Shen Y."/>
            <person name="Qiang B."/>
            <person name="Hou Y."/>
            <person name="Yu J."/>
            <person name="Jin Q."/>
        </authorList>
    </citation>
    <scope>NUCLEOTIDE SEQUENCE [LARGE SCALE GENOMIC DNA]</scope>
    <source>
        <strain>Sd197</strain>
    </source>
</reference>
<feature type="chain" id="PRO_0000280028" description="Glutathione import ATP-binding protein GsiA">
    <location>
        <begin position="1"/>
        <end position="623"/>
    </location>
</feature>
<feature type="domain" description="ABC transporter 1" evidence="2">
    <location>
        <begin position="15"/>
        <end position="269"/>
    </location>
</feature>
<feature type="domain" description="ABC transporter 2" evidence="2">
    <location>
        <begin position="314"/>
        <end position="564"/>
    </location>
</feature>
<feature type="binding site" evidence="2">
    <location>
        <begin position="49"/>
        <end position="56"/>
    </location>
    <ligand>
        <name>ATP</name>
        <dbReference type="ChEBI" id="CHEBI:30616"/>
    </ligand>
</feature>
<feature type="binding site" evidence="2">
    <location>
        <begin position="357"/>
        <end position="364"/>
    </location>
    <ligand>
        <name>ATP</name>
        <dbReference type="ChEBI" id="CHEBI:30616"/>
    </ligand>
</feature>
<keyword id="KW-0067">ATP-binding</keyword>
<keyword id="KW-0997">Cell inner membrane</keyword>
<keyword id="KW-1003">Cell membrane</keyword>
<keyword id="KW-0378">Hydrolase</keyword>
<keyword id="KW-0472">Membrane</keyword>
<keyword id="KW-0547">Nucleotide-binding</keyword>
<keyword id="KW-1185">Reference proteome</keyword>
<keyword id="KW-0677">Repeat</keyword>
<keyword id="KW-1278">Translocase</keyword>
<keyword id="KW-0813">Transport</keyword>